<organism>
    <name type="scientific">Cereibacter sphaeroides (strain ATCC 17025 / ATH 2.4.3)</name>
    <name type="common">Rhodobacter sphaeroides</name>
    <dbReference type="NCBI Taxonomy" id="349102"/>
    <lineage>
        <taxon>Bacteria</taxon>
        <taxon>Pseudomonadati</taxon>
        <taxon>Pseudomonadota</taxon>
        <taxon>Alphaproteobacteria</taxon>
        <taxon>Rhodobacterales</taxon>
        <taxon>Paracoccaceae</taxon>
        <taxon>Cereibacter</taxon>
    </lineage>
</organism>
<accession>A4WVE8</accession>
<evidence type="ECO:0000255" key="1">
    <source>
        <dbReference type="HAMAP-Rule" id="MF_00105"/>
    </source>
</evidence>
<sequence>MEKIPMTRAGFAALDDELKLLKTVERPAVIRAIAEAREHGDLSENAEYHAAREKQSFIEGRIKELEALLSLAEVIDPARLSGSIKFGATVTILDEETEEEKTYQIVGEAEADIENGLLNIKSPLARALIGKDEGDSIEVKTPGGERGYEVVSVRFV</sequence>
<name>GREA_CERS5</name>
<comment type="function">
    <text evidence="1">Necessary for efficient RNA polymerase transcription elongation past template-encoded arresting sites. The arresting sites in DNA have the property of trapping a certain fraction of elongating RNA polymerases that pass through, resulting in locked ternary complexes. Cleavage of the nascent transcript by cleavage factors such as GreA or GreB allows the resumption of elongation from the new 3'terminus. GreA releases sequences of 2 to 3 nucleotides.</text>
</comment>
<comment type="similarity">
    <text evidence="1">Belongs to the GreA/GreB family.</text>
</comment>
<feature type="chain" id="PRO_1000034293" description="Transcription elongation factor GreA">
    <location>
        <begin position="1"/>
        <end position="156"/>
    </location>
</feature>
<feature type="coiled-coil region" evidence="1">
    <location>
        <begin position="46"/>
        <end position="73"/>
    </location>
</feature>
<keyword id="KW-0175">Coiled coil</keyword>
<keyword id="KW-0238">DNA-binding</keyword>
<keyword id="KW-0804">Transcription</keyword>
<keyword id="KW-0805">Transcription regulation</keyword>
<reference key="1">
    <citation type="submission" date="2007-04" db="EMBL/GenBank/DDBJ databases">
        <title>Complete sequence of chromosome of Rhodobacter sphaeroides ATCC 17025.</title>
        <authorList>
            <consortium name="US DOE Joint Genome Institute"/>
            <person name="Copeland A."/>
            <person name="Lucas S."/>
            <person name="Lapidus A."/>
            <person name="Barry K."/>
            <person name="Detter J.C."/>
            <person name="Glavina del Rio T."/>
            <person name="Hammon N."/>
            <person name="Israni S."/>
            <person name="Dalin E."/>
            <person name="Tice H."/>
            <person name="Pitluck S."/>
            <person name="Chertkov O."/>
            <person name="Brettin T."/>
            <person name="Bruce D."/>
            <person name="Han C."/>
            <person name="Schmutz J."/>
            <person name="Larimer F."/>
            <person name="Land M."/>
            <person name="Hauser L."/>
            <person name="Kyrpides N."/>
            <person name="Kim E."/>
            <person name="Richardson P."/>
            <person name="Mackenzie C."/>
            <person name="Choudhary M."/>
            <person name="Donohue T.J."/>
            <person name="Kaplan S."/>
        </authorList>
    </citation>
    <scope>NUCLEOTIDE SEQUENCE [LARGE SCALE GENOMIC DNA]</scope>
    <source>
        <strain>ATCC 17025 / ATH 2.4.3</strain>
    </source>
</reference>
<protein>
    <recommendedName>
        <fullName evidence="1">Transcription elongation factor GreA</fullName>
    </recommendedName>
    <alternativeName>
        <fullName evidence="1">Transcript cleavage factor GreA</fullName>
    </alternativeName>
</protein>
<proteinExistence type="inferred from homology"/>
<gene>
    <name evidence="1" type="primary">greA</name>
    <name type="ordered locus">Rsph17025_2474</name>
</gene>
<dbReference type="EMBL" id="CP000661">
    <property type="protein sequence ID" value="ABP71362.1"/>
    <property type="molecule type" value="Genomic_DNA"/>
</dbReference>
<dbReference type="SMR" id="A4WVE8"/>
<dbReference type="STRING" id="349102.Rsph17025_2474"/>
<dbReference type="KEGG" id="rsq:Rsph17025_2474"/>
<dbReference type="eggNOG" id="COG0782">
    <property type="taxonomic scope" value="Bacteria"/>
</dbReference>
<dbReference type="HOGENOM" id="CLU_101379_2_0_5"/>
<dbReference type="GO" id="GO:0003677">
    <property type="term" value="F:DNA binding"/>
    <property type="evidence" value="ECO:0007669"/>
    <property type="project" value="UniProtKB-UniRule"/>
</dbReference>
<dbReference type="GO" id="GO:0070063">
    <property type="term" value="F:RNA polymerase binding"/>
    <property type="evidence" value="ECO:0007669"/>
    <property type="project" value="InterPro"/>
</dbReference>
<dbReference type="GO" id="GO:0006354">
    <property type="term" value="P:DNA-templated transcription elongation"/>
    <property type="evidence" value="ECO:0007669"/>
    <property type="project" value="TreeGrafter"/>
</dbReference>
<dbReference type="GO" id="GO:0032784">
    <property type="term" value="P:regulation of DNA-templated transcription elongation"/>
    <property type="evidence" value="ECO:0007669"/>
    <property type="project" value="UniProtKB-UniRule"/>
</dbReference>
<dbReference type="FunFam" id="1.10.287.180:FF:000001">
    <property type="entry name" value="Transcription elongation factor GreA"/>
    <property type="match status" value="1"/>
</dbReference>
<dbReference type="FunFam" id="3.10.50.30:FF:000001">
    <property type="entry name" value="Transcription elongation factor GreA"/>
    <property type="match status" value="1"/>
</dbReference>
<dbReference type="Gene3D" id="3.10.50.30">
    <property type="entry name" value="Transcription elongation factor, GreA/GreB, C-terminal domain"/>
    <property type="match status" value="1"/>
</dbReference>
<dbReference type="Gene3D" id="1.10.287.180">
    <property type="entry name" value="Transcription elongation factor, GreA/GreB, N-terminal domain"/>
    <property type="match status" value="1"/>
</dbReference>
<dbReference type="HAMAP" id="MF_00105">
    <property type="entry name" value="GreA_GreB"/>
    <property type="match status" value="1"/>
</dbReference>
<dbReference type="InterPro" id="IPR036953">
    <property type="entry name" value="GreA/GreB_C_sf"/>
</dbReference>
<dbReference type="InterPro" id="IPR018151">
    <property type="entry name" value="TF_GreA/GreB_CS"/>
</dbReference>
<dbReference type="InterPro" id="IPR006359">
    <property type="entry name" value="Tscrpt_elong_fac_GreA"/>
</dbReference>
<dbReference type="InterPro" id="IPR028624">
    <property type="entry name" value="Tscrpt_elong_fac_GreA/B"/>
</dbReference>
<dbReference type="InterPro" id="IPR001437">
    <property type="entry name" value="Tscrpt_elong_fac_GreA/B_C"/>
</dbReference>
<dbReference type="InterPro" id="IPR023459">
    <property type="entry name" value="Tscrpt_elong_fac_GreA/B_fam"/>
</dbReference>
<dbReference type="InterPro" id="IPR022691">
    <property type="entry name" value="Tscrpt_elong_fac_GreA/B_N"/>
</dbReference>
<dbReference type="InterPro" id="IPR036805">
    <property type="entry name" value="Tscrpt_elong_fac_GreA/B_N_sf"/>
</dbReference>
<dbReference type="NCBIfam" id="TIGR01462">
    <property type="entry name" value="greA"/>
    <property type="match status" value="1"/>
</dbReference>
<dbReference type="NCBIfam" id="NF001261">
    <property type="entry name" value="PRK00226.1-2"/>
    <property type="match status" value="1"/>
</dbReference>
<dbReference type="NCBIfam" id="NF001263">
    <property type="entry name" value="PRK00226.1-4"/>
    <property type="match status" value="1"/>
</dbReference>
<dbReference type="NCBIfam" id="NF001264">
    <property type="entry name" value="PRK00226.1-5"/>
    <property type="match status" value="1"/>
</dbReference>
<dbReference type="PANTHER" id="PTHR30437">
    <property type="entry name" value="TRANSCRIPTION ELONGATION FACTOR GREA"/>
    <property type="match status" value="1"/>
</dbReference>
<dbReference type="PANTHER" id="PTHR30437:SF4">
    <property type="entry name" value="TRANSCRIPTION ELONGATION FACTOR GREA"/>
    <property type="match status" value="1"/>
</dbReference>
<dbReference type="Pfam" id="PF01272">
    <property type="entry name" value="GreA_GreB"/>
    <property type="match status" value="1"/>
</dbReference>
<dbReference type="Pfam" id="PF03449">
    <property type="entry name" value="GreA_GreB_N"/>
    <property type="match status" value="1"/>
</dbReference>
<dbReference type="PIRSF" id="PIRSF006092">
    <property type="entry name" value="GreA_GreB"/>
    <property type="match status" value="1"/>
</dbReference>
<dbReference type="SUPFAM" id="SSF54534">
    <property type="entry name" value="FKBP-like"/>
    <property type="match status" value="1"/>
</dbReference>
<dbReference type="SUPFAM" id="SSF46557">
    <property type="entry name" value="GreA transcript cleavage protein, N-terminal domain"/>
    <property type="match status" value="1"/>
</dbReference>
<dbReference type="PROSITE" id="PS00829">
    <property type="entry name" value="GREAB_1"/>
    <property type="match status" value="1"/>
</dbReference>